<gene>
    <name evidence="1" type="primary">mutS</name>
    <name type="ordered locus">Caur_2954</name>
</gene>
<comment type="function">
    <text evidence="1">This protein is involved in the repair of mismatches in DNA. It is possible that it carries out the mismatch recognition step. This protein has a weak ATPase activity.</text>
</comment>
<comment type="similarity">
    <text evidence="1">Belongs to the DNA mismatch repair MutS family.</text>
</comment>
<protein>
    <recommendedName>
        <fullName evidence="1">DNA mismatch repair protein MutS</fullName>
    </recommendedName>
</protein>
<sequence>MATIELHAWYRQYRKLKEEAADAILLFRFGDFYETFDDDAKLIAELLDITLTRKEYAVDKRLPKDQQKLYAPMAGMPYHAVDRYVSELIARGYRVAIAEQLSETEAMRNDTRPRSVYAAGLTPVESSGKMVQRAIVRVITPGTVIDPAMLPDRTNNYLAAVIVEQGKVGLAYADLSTGEFAAAEFTDARALMQLQAELARLSPAEVLVPDDEALRLPNLEPVQARLSQDLAPLTKEEREALLPHERVARRLEGASAASWTQGYVTEWPLWRWELATTTEVLCEHLALPSLAVCGLDGRPLATRAAGALLQYAQVTQRQRVSQLRALRVYHTGAYMLLDPQTRRNLELLESGGRQGAKASLIAVLDRTCTAMGARLLRRWITQPLIVIEPLQVRQHAVARLVAETMARLEVRSALADLPDMERALNRIAQGITVATPRDMTQLRAALRKLPAVAQAVQALLPDLLAAEMPGEPPLVFDVCADVLDLLERALDDDPPALLGSSNYLRAAEEGGERPRRVIRPGFDQRLDALIRASRHAQEFIDRLESKERERTGIRSLKVGYNQVFGYYIEISRAVDAKLIPAHYERKQTLVNAERYVTEELKYYEGLLSDARLKLVDLERDIFQRLCDELQPHLDRLRATIAAVARIDALAALAEVAVRGRYVQPRLRTDRVLRIKQGRHPVVERTLSEPFIGNDIDLDGEQAQILIITGPNMAGKSTFLRQVALITLMAQIGSFVPADEAEIGLVDRIFTRIGAQDDIATGQSTFMVEMTETAALLMQSTPRSLIILDEVGRGTSTYDGMAIARAVVEYIHDHPRLGCRTLFATHYHELIALERELPRVRNYHMAAVERDGRVVFLHELRPGGADRSYGIHVAELAGIPPEVIRRASALLADLEGQRPPSSPAQPPAPPAPVVVPAQETGQGMQLSFFDLAPHPVVEYLRRLRIEELTPLEALNRLAELQRLAGQG</sequence>
<organism>
    <name type="scientific">Chloroflexus aurantiacus (strain ATCC 29366 / DSM 635 / J-10-fl)</name>
    <dbReference type="NCBI Taxonomy" id="324602"/>
    <lineage>
        <taxon>Bacteria</taxon>
        <taxon>Bacillati</taxon>
        <taxon>Chloroflexota</taxon>
        <taxon>Chloroflexia</taxon>
        <taxon>Chloroflexales</taxon>
        <taxon>Chloroflexineae</taxon>
        <taxon>Chloroflexaceae</taxon>
        <taxon>Chloroflexus</taxon>
    </lineage>
</organism>
<dbReference type="EMBL" id="CP000909">
    <property type="protein sequence ID" value="ABY36153.1"/>
    <property type="molecule type" value="Genomic_DNA"/>
</dbReference>
<dbReference type="RefSeq" id="WP_012258806.1">
    <property type="nucleotide sequence ID" value="NC_010175.1"/>
</dbReference>
<dbReference type="RefSeq" id="YP_001636542.1">
    <property type="nucleotide sequence ID" value="NC_010175.1"/>
</dbReference>
<dbReference type="SMR" id="A9WFZ9"/>
<dbReference type="FunCoup" id="A9WFZ9">
    <property type="interactions" value="406"/>
</dbReference>
<dbReference type="STRING" id="324602.Caur_2954"/>
<dbReference type="EnsemblBacteria" id="ABY36153">
    <property type="protein sequence ID" value="ABY36153"/>
    <property type="gene ID" value="Caur_2954"/>
</dbReference>
<dbReference type="KEGG" id="cau:Caur_2954"/>
<dbReference type="PATRIC" id="fig|324602.8.peg.3352"/>
<dbReference type="eggNOG" id="COG0249">
    <property type="taxonomic scope" value="Bacteria"/>
</dbReference>
<dbReference type="HOGENOM" id="CLU_002472_3_0_0"/>
<dbReference type="InParanoid" id="A9WFZ9"/>
<dbReference type="Proteomes" id="UP000002008">
    <property type="component" value="Chromosome"/>
</dbReference>
<dbReference type="GO" id="GO:0005829">
    <property type="term" value="C:cytosol"/>
    <property type="evidence" value="ECO:0000318"/>
    <property type="project" value="GO_Central"/>
</dbReference>
<dbReference type="GO" id="GO:0005524">
    <property type="term" value="F:ATP binding"/>
    <property type="evidence" value="ECO:0007669"/>
    <property type="project" value="UniProtKB-UniRule"/>
</dbReference>
<dbReference type="GO" id="GO:0140664">
    <property type="term" value="F:ATP-dependent DNA damage sensor activity"/>
    <property type="evidence" value="ECO:0007669"/>
    <property type="project" value="InterPro"/>
</dbReference>
<dbReference type="GO" id="GO:0003684">
    <property type="term" value="F:damaged DNA binding"/>
    <property type="evidence" value="ECO:0007669"/>
    <property type="project" value="UniProtKB-UniRule"/>
</dbReference>
<dbReference type="GO" id="GO:0030983">
    <property type="term" value="F:mismatched DNA binding"/>
    <property type="evidence" value="ECO:0000318"/>
    <property type="project" value="GO_Central"/>
</dbReference>
<dbReference type="GO" id="GO:0006298">
    <property type="term" value="P:mismatch repair"/>
    <property type="evidence" value="ECO:0000318"/>
    <property type="project" value="GO_Central"/>
</dbReference>
<dbReference type="CDD" id="cd03284">
    <property type="entry name" value="ABC_MutS1"/>
    <property type="match status" value="1"/>
</dbReference>
<dbReference type="FunFam" id="1.10.1420.10:FF:000001">
    <property type="entry name" value="DNA mismatch repair protein MutS"/>
    <property type="match status" value="1"/>
</dbReference>
<dbReference type="FunFam" id="1.10.1420.10:FF:000002">
    <property type="entry name" value="DNA mismatch repair protein MutS"/>
    <property type="match status" value="1"/>
</dbReference>
<dbReference type="FunFam" id="3.30.420.110:FF:000034">
    <property type="entry name" value="DNA mismatch repair protein MutS"/>
    <property type="match status" value="1"/>
</dbReference>
<dbReference type="FunFam" id="3.40.50.300:FF:001579">
    <property type="entry name" value="DNA mismatch repair protein MutS"/>
    <property type="match status" value="1"/>
</dbReference>
<dbReference type="Gene3D" id="1.10.1420.10">
    <property type="match status" value="2"/>
</dbReference>
<dbReference type="Gene3D" id="3.40.1170.10">
    <property type="entry name" value="DNA repair protein MutS, domain I"/>
    <property type="match status" value="1"/>
</dbReference>
<dbReference type="Gene3D" id="3.30.420.110">
    <property type="entry name" value="MutS, connector domain"/>
    <property type="match status" value="1"/>
</dbReference>
<dbReference type="Gene3D" id="3.40.50.300">
    <property type="entry name" value="P-loop containing nucleotide triphosphate hydrolases"/>
    <property type="match status" value="1"/>
</dbReference>
<dbReference type="HAMAP" id="MF_00096">
    <property type="entry name" value="MutS"/>
    <property type="match status" value="1"/>
</dbReference>
<dbReference type="InterPro" id="IPR005748">
    <property type="entry name" value="DNA_mismatch_repair_MutS"/>
</dbReference>
<dbReference type="InterPro" id="IPR007695">
    <property type="entry name" value="DNA_mismatch_repair_MutS-lik_N"/>
</dbReference>
<dbReference type="InterPro" id="IPR017261">
    <property type="entry name" value="DNA_mismatch_repair_MutS/MSH"/>
</dbReference>
<dbReference type="InterPro" id="IPR000432">
    <property type="entry name" value="DNA_mismatch_repair_MutS_C"/>
</dbReference>
<dbReference type="InterPro" id="IPR007861">
    <property type="entry name" value="DNA_mismatch_repair_MutS_clamp"/>
</dbReference>
<dbReference type="InterPro" id="IPR007696">
    <property type="entry name" value="DNA_mismatch_repair_MutS_core"/>
</dbReference>
<dbReference type="InterPro" id="IPR016151">
    <property type="entry name" value="DNA_mismatch_repair_MutS_N"/>
</dbReference>
<dbReference type="InterPro" id="IPR036187">
    <property type="entry name" value="DNA_mismatch_repair_MutS_sf"/>
</dbReference>
<dbReference type="InterPro" id="IPR007860">
    <property type="entry name" value="DNA_mmatch_repair_MutS_con_dom"/>
</dbReference>
<dbReference type="InterPro" id="IPR045076">
    <property type="entry name" value="MutS"/>
</dbReference>
<dbReference type="InterPro" id="IPR036678">
    <property type="entry name" value="MutS_con_dom_sf"/>
</dbReference>
<dbReference type="InterPro" id="IPR027417">
    <property type="entry name" value="P-loop_NTPase"/>
</dbReference>
<dbReference type="NCBIfam" id="TIGR01070">
    <property type="entry name" value="mutS1"/>
    <property type="match status" value="1"/>
</dbReference>
<dbReference type="NCBIfam" id="NF003810">
    <property type="entry name" value="PRK05399.1"/>
    <property type="match status" value="1"/>
</dbReference>
<dbReference type="PANTHER" id="PTHR11361:SF34">
    <property type="entry name" value="DNA MISMATCH REPAIR PROTEIN MSH1, MITOCHONDRIAL"/>
    <property type="match status" value="1"/>
</dbReference>
<dbReference type="PANTHER" id="PTHR11361">
    <property type="entry name" value="DNA MISMATCH REPAIR PROTEIN MUTS FAMILY MEMBER"/>
    <property type="match status" value="1"/>
</dbReference>
<dbReference type="Pfam" id="PF01624">
    <property type="entry name" value="MutS_I"/>
    <property type="match status" value="1"/>
</dbReference>
<dbReference type="Pfam" id="PF05188">
    <property type="entry name" value="MutS_II"/>
    <property type="match status" value="1"/>
</dbReference>
<dbReference type="Pfam" id="PF05192">
    <property type="entry name" value="MutS_III"/>
    <property type="match status" value="1"/>
</dbReference>
<dbReference type="Pfam" id="PF05190">
    <property type="entry name" value="MutS_IV"/>
    <property type="match status" value="1"/>
</dbReference>
<dbReference type="Pfam" id="PF00488">
    <property type="entry name" value="MutS_V"/>
    <property type="match status" value="1"/>
</dbReference>
<dbReference type="PIRSF" id="PIRSF037677">
    <property type="entry name" value="DNA_mis_repair_Msh6"/>
    <property type="match status" value="1"/>
</dbReference>
<dbReference type="SMART" id="SM00534">
    <property type="entry name" value="MUTSac"/>
    <property type="match status" value="1"/>
</dbReference>
<dbReference type="SMART" id="SM00533">
    <property type="entry name" value="MUTSd"/>
    <property type="match status" value="1"/>
</dbReference>
<dbReference type="SUPFAM" id="SSF55271">
    <property type="entry name" value="DNA repair protein MutS, domain I"/>
    <property type="match status" value="1"/>
</dbReference>
<dbReference type="SUPFAM" id="SSF53150">
    <property type="entry name" value="DNA repair protein MutS, domain II"/>
    <property type="match status" value="1"/>
</dbReference>
<dbReference type="SUPFAM" id="SSF48334">
    <property type="entry name" value="DNA repair protein MutS, domain III"/>
    <property type="match status" value="1"/>
</dbReference>
<dbReference type="SUPFAM" id="SSF52540">
    <property type="entry name" value="P-loop containing nucleoside triphosphate hydrolases"/>
    <property type="match status" value="1"/>
</dbReference>
<dbReference type="PROSITE" id="PS00486">
    <property type="entry name" value="DNA_MISMATCH_REPAIR_2"/>
    <property type="match status" value="1"/>
</dbReference>
<feature type="chain" id="PRO_0000335135" description="DNA mismatch repair protein MutS">
    <location>
        <begin position="1"/>
        <end position="966"/>
    </location>
</feature>
<feature type="region of interest" description="Disordered" evidence="2">
    <location>
        <begin position="894"/>
        <end position="914"/>
    </location>
</feature>
<feature type="compositionally biased region" description="Pro residues" evidence="2">
    <location>
        <begin position="899"/>
        <end position="912"/>
    </location>
</feature>
<feature type="binding site" evidence="1">
    <location>
        <begin position="709"/>
        <end position="716"/>
    </location>
    <ligand>
        <name>ATP</name>
        <dbReference type="ChEBI" id="CHEBI:30616"/>
    </ligand>
</feature>
<evidence type="ECO:0000255" key="1">
    <source>
        <dbReference type="HAMAP-Rule" id="MF_00096"/>
    </source>
</evidence>
<evidence type="ECO:0000256" key="2">
    <source>
        <dbReference type="SAM" id="MobiDB-lite"/>
    </source>
</evidence>
<keyword id="KW-0067">ATP-binding</keyword>
<keyword id="KW-0227">DNA damage</keyword>
<keyword id="KW-0234">DNA repair</keyword>
<keyword id="KW-0238">DNA-binding</keyword>
<keyword id="KW-0547">Nucleotide-binding</keyword>
<keyword id="KW-1185">Reference proteome</keyword>
<accession>A9WFZ9</accession>
<proteinExistence type="inferred from homology"/>
<reference key="1">
    <citation type="journal article" date="2011" name="BMC Genomics">
        <title>Complete genome sequence of the filamentous anoxygenic phototrophic bacterium Chloroflexus aurantiacus.</title>
        <authorList>
            <person name="Tang K.H."/>
            <person name="Barry K."/>
            <person name="Chertkov O."/>
            <person name="Dalin E."/>
            <person name="Han C.S."/>
            <person name="Hauser L.J."/>
            <person name="Honchak B.M."/>
            <person name="Karbach L.E."/>
            <person name="Land M.L."/>
            <person name="Lapidus A."/>
            <person name="Larimer F.W."/>
            <person name="Mikhailova N."/>
            <person name="Pitluck S."/>
            <person name="Pierson B.K."/>
            <person name="Blankenship R.E."/>
        </authorList>
    </citation>
    <scope>NUCLEOTIDE SEQUENCE [LARGE SCALE GENOMIC DNA]</scope>
    <source>
        <strain>ATCC 29366 / DSM 635 / J-10-fl</strain>
    </source>
</reference>
<name>MUTS_CHLAA</name>